<proteinExistence type="evidence at protein level"/>
<sequence>MPGDVEGCQHLKLKPADVENYQKICTQIFSCHFVPRRCSTCKRINKRSIRCLSCHSVGCLWGHHGEEHAMEHTHMIGVDVKNGHTYCFGCQDYVYQTELETLRFKIKNIKAWQSDHKRLPEKYNQMVCLEAYRKYPPVCATAGLRGIQNLGATCFMSVILQSILHNPLVRNLFFSGFHTSTDCKRPTCMTCAIDDMFSSIYNSKNKSTFYGPTAVLNLMWKLSKSLCGYSQQDGHEFFVYLLDQMHTESGGGTSMPCTCPIHRIFSGSLKNVVTCLDCKKERVAVDPLMDISLDINEPTLQGCLERFVSKEKVQYSCHSCGSKNAIKQLVFDKLPPTICMQLKRFEQNNFAMSTKIDKQVSYPAFLRMRYNFNQDDVDYQLYSVVCHKGTLDTGHYIAYTYYQNQWFLLDDTTIVEVKESEVLNSQAYLLFYHERQILYSDEMTVKTEN</sequence>
<protein>
    <recommendedName>
        <fullName>Probable ubiquitin carboxyl-terminal hydrolase 8</fullName>
        <ecNumber>3.4.19.12</ecNumber>
    </recommendedName>
    <alternativeName>
        <fullName>Deubiquitinating enzyme 8</fullName>
    </alternativeName>
    <alternativeName>
        <fullName>SAGA complex subunit Ubp8</fullName>
    </alternativeName>
    <alternativeName>
        <fullName>Ubiquitin thioesterase 8</fullName>
    </alternativeName>
    <alternativeName>
        <fullName>Ubiquitin-specific-processing protease 8</fullName>
    </alternativeName>
</protein>
<name>UBP8_SCHPO</name>
<feature type="chain" id="PRO_0000080609" description="Probable ubiquitin carboxyl-terminal hydrolase 8">
    <location>
        <begin position="1"/>
        <end position="449"/>
    </location>
</feature>
<feature type="domain" description="USP" evidence="3">
    <location>
        <begin position="145"/>
        <end position="435"/>
    </location>
</feature>
<feature type="zinc finger region" description="UBP-type" evidence="2">
    <location>
        <begin position="6"/>
        <end position="113"/>
    </location>
</feature>
<feature type="active site" description="Nucleophile" evidence="3">
    <location>
        <position position="154"/>
    </location>
</feature>
<feature type="active site" description="Proton acceptor" evidence="3">
    <location>
        <position position="395"/>
    </location>
</feature>
<feature type="binding site" evidence="1">
    <location>
        <position position="8"/>
    </location>
    <ligand>
        <name>Zn(2+)</name>
        <dbReference type="ChEBI" id="CHEBI:29105"/>
        <label>1</label>
    </ligand>
</feature>
<feature type="binding site" evidence="1">
    <location>
        <position position="10"/>
    </location>
    <ligand>
        <name>Zn(2+)</name>
        <dbReference type="ChEBI" id="CHEBI:29105"/>
        <label>1</label>
    </ligand>
</feature>
<feature type="binding site" evidence="1">
    <location>
        <position position="38"/>
    </location>
    <ligand>
        <name>Zn(2+)</name>
        <dbReference type="ChEBI" id="CHEBI:29105"/>
        <label>2</label>
    </ligand>
</feature>
<feature type="binding site" evidence="1">
    <location>
        <position position="41"/>
    </location>
    <ligand>
        <name>Zn(2+)</name>
        <dbReference type="ChEBI" id="CHEBI:29105"/>
        <label>2</label>
    </ligand>
</feature>
<feature type="binding site" evidence="1">
    <location>
        <position position="51"/>
    </location>
    <ligand>
        <name>Zn(2+)</name>
        <dbReference type="ChEBI" id="CHEBI:29105"/>
        <label>3</label>
    </ligand>
</feature>
<feature type="binding site" evidence="1">
    <location>
        <position position="54"/>
    </location>
    <ligand>
        <name>Zn(2+)</name>
        <dbReference type="ChEBI" id="CHEBI:29105"/>
        <label>3</label>
    </ligand>
</feature>
<feature type="binding site" evidence="1">
    <location>
        <position position="59"/>
    </location>
    <ligand>
        <name>Zn(2+)</name>
        <dbReference type="ChEBI" id="CHEBI:29105"/>
        <label>2</label>
    </ligand>
</feature>
<feature type="binding site" evidence="1">
    <location>
        <position position="64"/>
    </location>
    <ligand>
        <name>Zn(2+)</name>
        <dbReference type="ChEBI" id="CHEBI:29105"/>
        <label>2</label>
    </ligand>
</feature>
<feature type="binding site" evidence="1">
    <location>
        <position position="68"/>
    </location>
    <ligand>
        <name>Zn(2+)</name>
        <dbReference type="ChEBI" id="CHEBI:29105"/>
        <label>3</label>
    </ligand>
</feature>
<feature type="binding site" evidence="1">
    <location>
        <position position="74"/>
    </location>
    <ligand>
        <name>Zn(2+)</name>
        <dbReference type="ChEBI" id="CHEBI:29105"/>
        <label>3</label>
    </ligand>
</feature>
<feature type="binding site" evidence="1">
    <location>
        <position position="87"/>
    </location>
    <ligand>
        <name>Zn(2+)</name>
        <dbReference type="ChEBI" id="CHEBI:29105"/>
        <label>1</label>
    </ligand>
</feature>
<feature type="binding site" evidence="1">
    <location>
        <position position="90"/>
    </location>
    <ligand>
        <name>Zn(2+)</name>
        <dbReference type="ChEBI" id="CHEBI:29105"/>
        <label>1</label>
    </ligand>
</feature>
<feature type="binding site" evidence="1">
    <location>
        <position position="178"/>
    </location>
    <ligand>
        <name>Zn(2+)</name>
        <dbReference type="ChEBI" id="CHEBI:29105"/>
        <label>4</label>
    </ligand>
</feature>
<feature type="binding site" evidence="1">
    <location>
        <position position="183"/>
    </location>
    <ligand>
        <name>Zn(2+)</name>
        <dbReference type="ChEBI" id="CHEBI:29105"/>
        <label>4</label>
    </ligand>
</feature>
<feature type="binding site" evidence="1">
    <location>
        <position position="188"/>
    </location>
    <ligand>
        <name>Zn(2+)</name>
        <dbReference type="ChEBI" id="CHEBI:29105"/>
        <label>4</label>
    </ligand>
</feature>
<feature type="binding site" evidence="1">
    <location>
        <position position="191"/>
    </location>
    <ligand>
        <name>Zn(2+)</name>
        <dbReference type="ChEBI" id="CHEBI:29105"/>
        <label>4</label>
    </ligand>
</feature>
<feature type="binding site" evidence="1">
    <location>
        <position position="246"/>
    </location>
    <ligand>
        <name>Zn(2+)</name>
        <dbReference type="ChEBI" id="CHEBI:29105"/>
        <label>5</label>
    </ligand>
</feature>
<feature type="binding site" evidence="1">
    <location>
        <position position="257"/>
    </location>
    <ligand>
        <name>Zn(2+)</name>
        <dbReference type="ChEBI" id="CHEBI:29105"/>
        <label>5</label>
    </ligand>
</feature>
<feature type="binding site" evidence="1">
    <location>
        <position position="259"/>
    </location>
    <ligand>
        <name>Zn(2+)</name>
        <dbReference type="ChEBI" id="CHEBI:29105"/>
        <label>5</label>
    </ligand>
</feature>
<feature type="binding site" evidence="1">
    <location>
        <position position="262"/>
    </location>
    <ligand>
        <name>Zn(2+)</name>
        <dbReference type="ChEBI" id="CHEBI:29105"/>
        <label>5</label>
    </ligand>
</feature>
<feature type="binding site" evidence="1">
    <location>
        <position position="275"/>
    </location>
    <ligand>
        <name>Zn(2+)</name>
        <dbReference type="ChEBI" id="CHEBI:29105"/>
        <label>6</label>
    </ligand>
</feature>
<feature type="binding site" evidence="1">
    <location>
        <position position="278"/>
    </location>
    <ligand>
        <name>Zn(2+)</name>
        <dbReference type="ChEBI" id="CHEBI:29105"/>
        <label>6</label>
    </ligand>
</feature>
<feature type="binding site" evidence="1">
    <location>
        <position position="317"/>
    </location>
    <ligand>
        <name>Zn(2+)</name>
        <dbReference type="ChEBI" id="CHEBI:29105"/>
        <label>6</label>
    </ligand>
</feature>
<feature type="binding site" evidence="1">
    <location>
        <position position="320"/>
    </location>
    <ligand>
        <name>Zn(2+)</name>
        <dbReference type="ChEBI" id="CHEBI:29105"/>
        <label>6</label>
    </ligand>
</feature>
<organism>
    <name type="scientific">Schizosaccharomyces pombe (strain 972 / ATCC 24843)</name>
    <name type="common">Fission yeast</name>
    <dbReference type="NCBI Taxonomy" id="284812"/>
    <lineage>
        <taxon>Eukaryota</taxon>
        <taxon>Fungi</taxon>
        <taxon>Dikarya</taxon>
        <taxon>Ascomycota</taxon>
        <taxon>Taphrinomycotina</taxon>
        <taxon>Schizosaccharomycetes</taxon>
        <taxon>Schizosaccharomycetales</taxon>
        <taxon>Schizosaccharomycetaceae</taxon>
        <taxon>Schizosaccharomyces</taxon>
    </lineage>
</organism>
<evidence type="ECO:0000250" key="1">
    <source>
        <dbReference type="UniProtKB" id="P50102"/>
    </source>
</evidence>
<evidence type="ECO:0000255" key="2">
    <source>
        <dbReference type="PROSITE-ProRule" id="PRU00502"/>
    </source>
</evidence>
<evidence type="ECO:0000255" key="3">
    <source>
        <dbReference type="PROSITE-ProRule" id="PRU01035"/>
    </source>
</evidence>
<evidence type="ECO:0000269" key="4">
    <source>
    </source>
</evidence>
<evidence type="ECO:0000269" key="5">
    <source>
    </source>
</evidence>
<evidence type="ECO:0000305" key="6"/>
<gene>
    <name type="primary">ubp8</name>
    <name type="ORF">SPAC13A11.04c</name>
</gene>
<dbReference type="EC" id="3.4.19.12"/>
<dbReference type="EMBL" id="CU329670">
    <property type="protein sequence ID" value="CAA90805.1"/>
    <property type="molecule type" value="Genomic_DNA"/>
</dbReference>
<dbReference type="PIR" id="T37611">
    <property type="entry name" value="T37611"/>
</dbReference>
<dbReference type="RefSeq" id="NP_592992.1">
    <property type="nucleotide sequence ID" value="NM_001018391.2"/>
</dbReference>
<dbReference type="SMR" id="Q09738"/>
<dbReference type="BioGRID" id="278611">
    <property type="interactions" value="115"/>
</dbReference>
<dbReference type="FunCoup" id="Q09738">
    <property type="interactions" value="280"/>
</dbReference>
<dbReference type="IntAct" id="Q09738">
    <property type="interactions" value="2"/>
</dbReference>
<dbReference type="MINT" id="Q09738"/>
<dbReference type="STRING" id="284812.Q09738"/>
<dbReference type="MEROPS" id="C19.A61"/>
<dbReference type="PaxDb" id="4896-SPAC13A11.04c.1"/>
<dbReference type="EnsemblFungi" id="SPAC13A11.04c.1">
    <property type="protein sequence ID" value="SPAC13A11.04c.1:pep"/>
    <property type="gene ID" value="SPAC13A11.04c"/>
</dbReference>
<dbReference type="GeneID" id="2542135"/>
<dbReference type="KEGG" id="spo:2542135"/>
<dbReference type="PomBase" id="SPAC13A11.04c">
    <property type="gene designation" value="ubp8"/>
</dbReference>
<dbReference type="VEuPathDB" id="FungiDB:SPAC13A11.04c"/>
<dbReference type="eggNOG" id="KOG1867">
    <property type="taxonomic scope" value="Eukaryota"/>
</dbReference>
<dbReference type="HOGENOM" id="CLU_008279_11_2_1"/>
<dbReference type="InParanoid" id="Q09738"/>
<dbReference type="OMA" id="KSHNFWL"/>
<dbReference type="PhylomeDB" id="Q09738"/>
<dbReference type="Reactome" id="R-SPO-110314">
    <property type="pathway name" value="Recognition of DNA damage by PCNA-containing replication complex"/>
</dbReference>
<dbReference type="Reactome" id="R-SPO-5689880">
    <property type="pathway name" value="Ub-specific processing proteases"/>
</dbReference>
<dbReference type="Reactome" id="R-SPO-9664873">
    <property type="pathway name" value="Pexophagy"/>
</dbReference>
<dbReference type="PRO" id="PR:Q09738"/>
<dbReference type="Proteomes" id="UP000002485">
    <property type="component" value="Chromosome I"/>
</dbReference>
<dbReference type="GO" id="GO:0005829">
    <property type="term" value="C:cytosol"/>
    <property type="evidence" value="ECO:0000318"/>
    <property type="project" value="GO_Central"/>
</dbReference>
<dbReference type="GO" id="GO:0071819">
    <property type="term" value="C:DUBm complex"/>
    <property type="evidence" value="ECO:0000303"/>
    <property type="project" value="PomBase"/>
</dbReference>
<dbReference type="GO" id="GO:0005654">
    <property type="term" value="C:nucleoplasm"/>
    <property type="evidence" value="ECO:0007005"/>
    <property type="project" value="PomBase"/>
</dbReference>
<dbReference type="GO" id="GO:0005634">
    <property type="term" value="C:nucleus"/>
    <property type="evidence" value="ECO:0007005"/>
    <property type="project" value="PomBase"/>
</dbReference>
<dbReference type="GO" id="GO:0000124">
    <property type="term" value="C:SAGA complex"/>
    <property type="evidence" value="ECO:0000314"/>
    <property type="project" value="PomBase"/>
</dbReference>
<dbReference type="GO" id="GO:0004843">
    <property type="term" value="F:cysteine-type deubiquitinase activity"/>
    <property type="evidence" value="ECO:0000314"/>
    <property type="project" value="PomBase"/>
</dbReference>
<dbReference type="GO" id="GO:0140492">
    <property type="term" value="F:metal-dependent deubiquitinase activity"/>
    <property type="evidence" value="ECO:0007005"/>
    <property type="project" value="PomBase"/>
</dbReference>
<dbReference type="GO" id="GO:0016251">
    <property type="term" value="F:RNA polymerase II general transcription initiation factor activity"/>
    <property type="evidence" value="ECO:0000266"/>
    <property type="project" value="PomBase"/>
</dbReference>
<dbReference type="GO" id="GO:0003713">
    <property type="term" value="F:transcription coactivator activity"/>
    <property type="evidence" value="ECO:0000305"/>
    <property type="project" value="PomBase"/>
</dbReference>
<dbReference type="GO" id="GO:0008270">
    <property type="term" value="F:zinc ion binding"/>
    <property type="evidence" value="ECO:0007669"/>
    <property type="project" value="UniProtKB-KW"/>
</dbReference>
<dbReference type="GO" id="GO:0016579">
    <property type="term" value="P:protein deubiquitination"/>
    <property type="evidence" value="ECO:0007669"/>
    <property type="project" value="InterPro"/>
</dbReference>
<dbReference type="GO" id="GO:0006508">
    <property type="term" value="P:proteolysis"/>
    <property type="evidence" value="ECO:0007669"/>
    <property type="project" value="UniProtKB-KW"/>
</dbReference>
<dbReference type="GO" id="GO:0031647">
    <property type="term" value="P:regulation of protein stability"/>
    <property type="evidence" value="ECO:0000318"/>
    <property type="project" value="GO_Central"/>
</dbReference>
<dbReference type="GO" id="GO:0006357">
    <property type="term" value="P:regulation of transcription by RNA polymerase II"/>
    <property type="evidence" value="ECO:0000269"/>
    <property type="project" value="PomBase"/>
</dbReference>
<dbReference type="GO" id="GO:0045815">
    <property type="term" value="P:transcription initiation-coupled chromatin remodeling"/>
    <property type="evidence" value="ECO:0000305"/>
    <property type="project" value="PomBase"/>
</dbReference>
<dbReference type="CDD" id="cd02660">
    <property type="entry name" value="Peptidase_C19D"/>
    <property type="match status" value="1"/>
</dbReference>
<dbReference type="Gene3D" id="3.90.70.10">
    <property type="entry name" value="Cysteine proteinases"/>
    <property type="match status" value="1"/>
</dbReference>
<dbReference type="Gene3D" id="3.30.40.10">
    <property type="entry name" value="Zinc/RING finger domain, C3HC4 (zinc finger)"/>
    <property type="match status" value="1"/>
</dbReference>
<dbReference type="InterPro" id="IPR038765">
    <property type="entry name" value="Papain-like_cys_pep_sf"/>
</dbReference>
<dbReference type="InterPro" id="IPR050164">
    <property type="entry name" value="Peptidase_C19"/>
</dbReference>
<dbReference type="InterPro" id="IPR001394">
    <property type="entry name" value="Peptidase_C19_UCH"/>
</dbReference>
<dbReference type="InterPro" id="IPR018200">
    <property type="entry name" value="USP_CS"/>
</dbReference>
<dbReference type="InterPro" id="IPR028889">
    <property type="entry name" value="USP_dom"/>
</dbReference>
<dbReference type="InterPro" id="IPR013083">
    <property type="entry name" value="Znf_RING/FYVE/PHD"/>
</dbReference>
<dbReference type="InterPro" id="IPR001607">
    <property type="entry name" value="Znf_UBP"/>
</dbReference>
<dbReference type="PANTHER" id="PTHR24006">
    <property type="entry name" value="UBIQUITIN CARBOXYL-TERMINAL HYDROLASE"/>
    <property type="match status" value="1"/>
</dbReference>
<dbReference type="PANTHER" id="PTHR24006:SF937">
    <property type="entry name" value="UBIQUITIN CARBOXYL-TERMINAL HYDROLASE"/>
    <property type="match status" value="1"/>
</dbReference>
<dbReference type="Pfam" id="PF00443">
    <property type="entry name" value="UCH"/>
    <property type="match status" value="1"/>
</dbReference>
<dbReference type="Pfam" id="PF02148">
    <property type="entry name" value="zf-UBP"/>
    <property type="match status" value="1"/>
</dbReference>
<dbReference type="SMART" id="SM00290">
    <property type="entry name" value="ZnF_UBP"/>
    <property type="match status" value="1"/>
</dbReference>
<dbReference type="SUPFAM" id="SSF54001">
    <property type="entry name" value="Cysteine proteinases"/>
    <property type="match status" value="1"/>
</dbReference>
<dbReference type="SUPFAM" id="SSF57850">
    <property type="entry name" value="RING/U-box"/>
    <property type="match status" value="1"/>
</dbReference>
<dbReference type="PROSITE" id="PS00972">
    <property type="entry name" value="USP_1"/>
    <property type="match status" value="1"/>
</dbReference>
<dbReference type="PROSITE" id="PS00973">
    <property type="entry name" value="USP_2"/>
    <property type="match status" value="1"/>
</dbReference>
<dbReference type="PROSITE" id="PS50235">
    <property type="entry name" value="USP_3"/>
    <property type="match status" value="1"/>
</dbReference>
<dbReference type="PROSITE" id="PS50271">
    <property type="entry name" value="ZF_UBP"/>
    <property type="match status" value="1"/>
</dbReference>
<keyword id="KW-0378">Hydrolase</keyword>
<keyword id="KW-0479">Metal-binding</keyword>
<keyword id="KW-0539">Nucleus</keyword>
<keyword id="KW-0645">Protease</keyword>
<keyword id="KW-1185">Reference proteome</keyword>
<keyword id="KW-0788">Thiol protease</keyword>
<keyword id="KW-0833">Ubl conjugation pathway</keyword>
<keyword id="KW-0862">Zinc</keyword>
<keyword id="KW-0863">Zinc-finger</keyword>
<reference key="1">
    <citation type="journal article" date="2002" name="Nature">
        <title>The genome sequence of Schizosaccharomyces pombe.</title>
        <authorList>
            <person name="Wood V."/>
            <person name="Gwilliam R."/>
            <person name="Rajandream M.A."/>
            <person name="Lyne M.H."/>
            <person name="Lyne R."/>
            <person name="Stewart A."/>
            <person name="Sgouros J.G."/>
            <person name="Peat N."/>
            <person name="Hayles J."/>
            <person name="Baker S.G."/>
            <person name="Basham D."/>
            <person name="Bowman S."/>
            <person name="Brooks K."/>
            <person name="Brown D."/>
            <person name="Brown S."/>
            <person name="Chillingworth T."/>
            <person name="Churcher C.M."/>
            <person name="Collins M."/>
            <person name="Connor R."/>
            <person name="Cronin A."/>
            <person name="Davis P."/>
            <person name="Feltwell T."/>
            <person name="Fraser A."/>
            <person name="Gentles S."/>
            <person name="Goble A."/>
            <person name="Hamlin N."/>
            <person name="Harris D.E."/>
            <person name="Hidalgo J."/>
            <person name="Hodgson G."/>
            <person name="Holroyd S."/>
            <person name="Hornsby T."/>
            <person name="Howarth S."/>
            <person name="Huckle E.J."/>
            <person name="Hunt S."/>
            <person name="Jagels K."/>
            <person name="James K.D."/>
            <person name="Jones L."/>
            <person name="Jones M."/>
            <person name="Leather S."/>
            <person name="McDonald S."/>
            <person name="McLean J."/>
            <person name="Mooney P."/>
            <person name="Moule S."/>
            <person name="Mungall K.L."/>
            <person name="Murphy L.D."/>
            <person name="Niblett D."/>
            <person name="Odell C."/>
            <person name="Oliver K."/>
            <person name="O'Neil S."/>
            <person name="Pearson D."/>
            <person name="Quail M.A."/>
            <person name="Rabbinowitsch E."/>
            <person name="Rutherford K.M."/>
            <person name="Rutter S."/>
            <person name="Saunders D."/>
            <person name="Seeger K."/>
            <person name="Sharp S."/>
            <person name="Skelton J."/>
            <person name="Simmonds M.N."/>
            <person name="Squares R."/>
            <person name="Squares S."/>
            <person name="Stevens K."/>
            <person name="Taylor K."/>
            <person name="Taylor R.G."/>
            <person name="Tivey A."/>
            <person name="Walsh S.V."/>
            <person name="Warren T."/>
            <person name="Whitehead S."/>
            <person name="Woodward J.R."/>
            <person name="Volckaert G."/>
            <person name="Aert R."/>
            <person name="Robben J."/>
            <person name="Grymonprez B."/>
            <person name="Weltjens I."/>
            <person name="Vanstreels E."/>
            <person name="Rieger M."/>
            <person name="Schaefer M."/>
            <person name="Mueller-Auer S."/>
            <person name="Gabel C."/>
            <person name="Fuchs M."/>
            <person name="Duesterhoeft A."/>
            <person name="Fritzc C."/>
            <person name="Holzer E."/>
            <person name="Moestl D."/>
            <person name="Hilbert H."/>
            <person name="Borzym K."/>
            <person name="Langer I."/>
            <person name="Beck A."/>
            <person name="Lehrach H."/>
            <person name="Reinhardt R."/>
            <person name="Pohl T.M."/>
            <person name="Eger P."/>
            <person name="Zimmermann W."/>
            <person name="Wedler H."/>
            <person name="Wambutt R."/>
            <person name="Purnelle B."/>
            <person name="Goffeau A."/>
            <person name="Cadieu E."/>
            <person name="Dreano S."/>
            <person name="Gloux S."/>
            <person name="Lelaure V."/>
            <person name="Mottier S."/>
            <person name="Galibert F."/>
            <person name="Aves S.J."/>
            <person name="Xiang Z."/>
            <person name="Hunt C."/>
            <person name="Moore K."/>
            <person name="Hurst S.M."/>
            <person name="Lucas M."/>
            <person name="Rochet M."/>
            <person name="Gaillardin C."/>
            <person name="Tallada V.A."/>
            <person name="Garzon A."/>
            <person name="Thode G."/>
            <person name="Daga R.R."/>
            <person name="Cruzado L."/>
            <person name="Jimenez J."/>
            <person name="Sanchez M."/>
            <person name="del Rey F."/>
            <person name="Benito J."/>
            <person name="Dominguez A."/>
            <person name="Revuelta J.L."/>
            <person name="Moreno S."/>
            <person name="Armstrong J."/>
            <person name="Forsburg S.L."/>
            <person name="Cerutti L."/>
            <person name="Lowe T."/>
            <person name="McCombie W.R."/>
            <person name="Paulsen I."/>
            <person name="Potashkin J."/>
            <person name="Shpakovski G.V."/>
            <person name="Ussery D."/>
            <person name="Barrell B.G."/>
            <person name="Nurse P."/>
        </authorList>
    </citation>
    <scope>NUCLEOTIDE SEQUENCE [LARGE SCALE GENOMIC DNA]</scope>
    <source>
        <strain>972 / ATCC 24843</strain>
    </source>
</reference>
<reference key="2">
    <citation type="journal article" date="2008" name="Genes Dev.">
        <title>The S. pombe SAGA complex controls the switch from proliferation to sexual differentiation through the opposing roles of its subunits Gcn5 and Spt8.</title>
        <authorList>
            <person name="Helmlinger D."/>
            <person name="Marguerat S."/>
            <person name="Villen J."/>
            <person name="Gygi S.P."/>
            <person name="Bahler J."/>
            <person name="Winston F."/>
        </authorList>
    </citation>
    <scope>IDENTIFICATION IN THE SAGA COMPLEX</scope>
    <scope>IDENTIFICATION BY MASS SPECTROMETRY</scope>
</reference>
<reference key="3">
    <citation type="journal article" date="2010" name="PLoS Biol.">
        <title>A global census of fission yeast deubiquitinating enzyme localization and interaction networks reveals distinct compartmentalization profiles and overlapping functions in endocytosis and polarity.</title>
        <authorList>
            <person name="Kouranti I."/>
            <person name="McLean J.R."/>
            <person name="Feoktistova A."/>
            <person name="Liang P."/>
            <person name="Johnson A.E."/>
            <person name="Roberts-Galbraith R.H."/>
            <person name="Gould K.L."/>
        </authorList>
    </citation>
    <scope>SUBUNIT</scope>
    <scope>SUBCELLULAR LOCATION</scope>
</reference>
<accession>Q09738</accession>
<comment type="function">
    <text evidence="1">Histone deubiquitinating enzyme component of the transcription coactivator SAGA complex. SAGA acts as a general cofactor required for essentially all RNA polymerase II transcription. At the promoters, SAGA is required for transcription pre-initiation complex (PIC) recruitment. It influences RNA polymerase II transcriptional activity through different activities such as TBP interaction (via core/TAF module) and promoter selectivity, interaction with transcription activators (via Tra1/SPT module), and chromatin modification through histone acetylation (via HAT module) and deubiquitination (via DUB module). SAGA preferentially acetylates histones H3 (to form H3K9ac, H3K14ac, H3K18ac and H3K23ac) and H2B and deubiquitinates histone H2B. SAGA interacts with DNA via upstream activating sequences (UASs). Within the DUB module, the correctly positioned zinc finger domains of sgf11 and sgf73 are both required to fully activate the ubiquitin hydrolase ubp8. The DUB module is also linked to the splicing efficiency of many transcripts.</text>
</comment>
<comment type="catalytic activity">
    <reaction evidence="1">
        <text>Thiol-dependent hydrolysis of ester, thioester, amide, peptide and isopeptide bonds formed by the C-terminal Gly of ubiquitin (a 76-residue protein attached to proteins as an intracellular targeting signal).</text>
        <dbReference type="EC" id="3.4.19.12"/>
    </reaction>
</comment>
<comment type="subunit">
    <text evidence="1 4 5">Component of the 1.8 MDa SAGA (Spt-Ada-Gcn5 acetyltransferase) complex, which is composed of 19 subunits tra1, spt7, taf5, ngg1/ada3, sgf73, spt20, spt8, taf12, taf6, hfi1/ada1, ubp8, gcn5, ada2, spt3, sgf29, taf10, taf9, sgf11 and sus1 (PubMed:19056896, PubMed:20838651). The SAGA complex is composed of 4 modules, namely the HAT (histone acetyltransferase) module (gcn5, ada2, ngg1/ada3 and sgf29), the DUB (deubiquitinating) module (ubp8, sgf11, sgf73 and sus1), the core or TAF (TBP-associated factor) module (taf5, taf6, taf9, taf10 and taf12), and the Tra1 or SPT (Suppressor of Ty) module (tra1, hfi1/ada1, spt3, spt7, spt8 and spt20). The Tra1/SPT module binds activators, the core module recruits TBP (TATA-binding protein), the HAT module contains the histone H3 acetyltransferase gcn5, and the DUB module comprises the histone H2B deubiquitinase ubp8 (By similarity).</text>
</comment>
<comment type="subcellular location">
    <subcellularLocation>
        <location evidence="5">Nucleus</location>
    </subcellularLocation>
    <subcellularLocation>
        <location evidence="5">Nucleus</location>
        <location evidence="5">Nucleoplasm</location>
    </subcellularLocation>
</comment>
<comment type="domain">
    <text evidence="1">The UBP-type zinc finger domain is required for the interaction with the SAGA complex.</text>
</comment>
<comment type="domain">
    <text evidence="1">The USP domain is the catalytic domain, but it is only active when in complex with the other DUB module subunits.</text>
</comment>
<comment type="similarity">
    <text evidence="6">Belongs to the peptidase C19 family. UBP8 subfamily.</text>
</comment>